<protein>
    <recommendedName>
        <fullName evidence="5">Class I hydrophobin 17</fullName>
    </recommendedName>
</protein>
<feature type="signal peptide" evidence="2">
    <location>
        <begin position="1"/>
        <end position="19"/>
    </location>
</feature>
<feature type="chain" id="PRO_5013986275" description="Class I hydrophobin 17">
    <location>
        <begin position="20"/>
        <end position="112"/>
    </location>
</feature>
<feature type="glycosylation site" description="N-linked (GlcNAc...) asparagine" evidence="3">
    <location>
        <position position="108"/>
    </location>
</feature>
<feature type="disulfide bond" evidence="1">
    <location>
        <begin position="30"/>
        <end position="90"/>
    </location>
</feature>
<feature type="disulfide bond" evidence="1">
    <location>
        <begin position="37"/>
        <end position="84"/>
    </location>
</feature>
<feature type="disulfide bond" evidence="1">
    <location>
        <begin position="38"/>
        <end position="74"/>
    </location>
</feature>
<feature type="disulfide bond" evidence="1">
    <location>
        <begin position="91"/>
        <end position="104"/>
    </location>
</feature>
<organism>
    <name type="scientific">Pleurotus ostreatus (strain PC15)</name>
    <name type="common">Oyster mushroom</name>
    <dbReference type="NCBI Taxonomy" id="1137138"/>
    <lineage>
        <taxon>Eukaryota</taxon>
        <taxon>Fungi</taxon>
        <taxon>Dikarya</taxon>
        <taxon>Basidiomycota</taxon>
        <taxon>Agaricomycotina</taxon>
        <taxon>Agaricomycetes</taxon>
        <taxon>Agaricomycetidae</taxon>
        <taxon>Agaricales</taxon>
        <taxon>Pleurotineae</taxon>
        <taxon>Pleurotaceae</taxon>
        <taxon>Pleurotus</taxon>
    </lineage>
</organism>
<reference key="1">
    <citation type="journal article" date="2014" name="Proc. Natl. Acad. Sci. U.S.A.">
        <title>Extensive sampling of basidiomycete genomes demonstrates inadequacy of the white-rot/brown-rot paradigm for wood decay fungi.</title>
        <authorList>
            <person name="Riley R."/>
            <person name="Salamov A.A."/>
            <person name="Brown D.W."/>
            <person name="Nagy L.G."/>
            <person name="Floudas D."/>
            <person name="Held B.W."/>
            <person name="Levasseur A."/>
            <person name="Lombard V."/>
            <person name="Morin E."/>
            <person name="Otillar R."/>
            <person name="Lindquist E.A."/>
            <person name="Sun H."/>
            <person name="LaButti K.M."/>
            <person name="Schmutz J."/>
            <person name="Jabbour D."/>
            <person name="Luo H."/>
            <person name="Baker S.E."/>
            <person name="Pisabarro A.G."/>
            <person name="Walton J.D."/>
            <person name="Blanchette R.A."/>
            <person name="Henrissat B."/>
            <person name="Martin F."/>
            <person name="Cullen D."/>
            <person name="Hibbett D.S."/>
            <person name="Grigoriev I.V."/>
        </authorList>
    </citation>
    <scope>NUCLEOTIDE SEQUENCE [LARGE SCALE GENOMIC DNA]</scope>
    <source>
        <strain>PC15</strain>
    </source>
</reference>
<reference key="2">
    <citation type="journal article" date="2021" name="Microbiol. Res.">
        <title>Identification of hydrophobin genes and their physiological functions related to growth and development in Pleurotus ostreatus.</title>
        <authorList>
            <person name="Xu D."/>
            <person name="Wang Y."/>
            <person name="Keerio A.A."/>
            <person name="Ma A."/>
        </authorList>
    </citation>
    <scope>IDENTIFICATION</scope>
    <scope>FUNCTION</scope>
    <scope>DEVELOPMENTAL STAGE</scope>
</reference>
<dbReference type="EMBL" id="KL198013">
    <property type="protein sequence ID" value="KDQ23532.1"/>
    <property type="molecule type" value="Genomic_DNA"/>
</dbReference>
<dbReference type="STRING" id="1137138.A0A067NHE1"/>
<dbReference type="VEuPathDB" id="FungiDB:PLEOSDRAFT_171316"/>
<dbReference type="HOGENOM" id="CLU_105134_2_0_1"/>
<dbReference type="InParanoid" id="A0A067NHE1"/>
<dbReference type="OrthoDB" id="138913at5338"/>
<dbReference type="Proteomes" id="UP000027073">
    <property type="component" value="Unassembled WGS sequence"/>
</dbReference>
<dbReference type="GO" id="GO:0005576">
    <property type="term" value="C:extracellular region"/>
    <property type="evidence" value="ECO:0007669"/>
    <property type="project" value="UniProtKB-KW"/>
</dbReference>
<dbReference type="GO" id="GO:0009277">
    <property type="term" value="C:fungal-type cell wall"/>
    <property type="evidence" value="ECO:0007669"/>
    <property type="project" value="InterPro"/>
</dbReference>
<dbReference type="GO" id="GO:0005199">
    <property type="term" value="F:structural constituent of cell wall"/>
    <property type="evidence" value="ECO:0007669"/>
    <property type="project" value="InterPro"/>
</dbReference>
<dbReference type="CDD" id="cd23507">
    <property type="entry name" value="hydrophobin_I"/>
    <property type="match status" value="1"/>
</dbReference>
<dbReference type="InterPro" id="IPR001338">
    <property type="entry name" value="Hydrophobin"/>
</dbReference>
<dbReference type="Pfam" id="PF01185">
    <property type="entry name" value="Hydrophobin"/>
    <property type="match status" value="1"/>
</dbReference>
<dbReference type="SMART" id="SM00075">
    <property type="entry name" value="HYDRO"/>
    <property type="match status" value="1"/>
</dbReference>
<proteinExistence type="evidence at transcript level"/>
<comment type="function">
    <text evidence="4 6">Aerial growth, conidiation, and dispersal of filamentous fungi in the environment rely upon a capability of their secreting small amphipathic proteins called hydrophobins (HPBs) with low sequence identity. Class I can self-assemble into an outermost layer of rodlet bundles on aerial cell surfaces, conferring cellular hydrophobicity that supports fungal growth, development and dispersal; whereas Class II form highly ordered films at water-air interfaces through intermolecular interactions but contribute nothing to the rodlet structure (Probable). Hydph17 is a class I hydrophobin involved in mycelial growth (PubMed:33636611).</text>
</comment>
<comment type="subunit">
    <text evidence="1">Self-assembles to form functional amyloid fibrils called rodlets. Self-assembly into fibrillar rodlets occurs spontaneously at hydrophobic:hydrophilic interfaces and the rodlets further associate laterally to form amphipathic monolayers.</text>
</comment>
<comment type="subcellular location">
    <subcellularLocation>
        <location evidence="7">Secreted</location>
    </subcellularLocation>
    <subcellularLocation>
        <location evidence="7">Secreted</location>
        <location evidence="7">Cell wall</location>
    </subcellularLocation>
</comment>
<comment type="developmental stage">
    <text evidence="4">Specifically expressed in monokaryotic mycelia.</text>
</comment>
<comment type="similarity">
    <text evidence="6">Belongs to the fungal hydrophobin family.</text>
</comment>
<keyword id="KW-0134">Cell wall</keyword>
<keyword id="KW-1015">Disulfide bond</keyword>
<keyword id="KW-0325">Glycoprotein</keyword>
<keyword id="KW-1185">Reference proteome</keyword>
<keyword id="KW-0964">Secreted</keyword>
<keyword id="KW-0732">Signal</keyword>
<evidence type="ECO:0000250" key="1">
    <source>
        <dbReference type="UniProtKB" id="Q04571"/>
    </source>
</evidence>
<evidence type="ECO:0000255" key="2"/>
<evidence type="ECO:0000255" key="3">
    <source>
        <dbReference type="PROSITE-ProRule" id="PRU00498"/>
    </source>
</evidence>
<evidence type="ECO:0000269" key="4">
    <source>
    </source>
</evidence>
<evidence type="ECO:0000303" key="5">
    <source>
    </source>
</evidence>
<evidence type="ECO:0000305" key="6"/>
<evidence type="ECO:0000305" key="7">
    <source>
    </source>
</evidence>
<sequence length="112" mass="11339">MYSQSMVLLAAAFASFVAASPMALHGANSCSTGPVHCCNSVEHHTQPHANSLARGSGLVGLDIETLVGNIGLDCSPIGLSSTDCTAQTVCCDDVTFDGKVAVGCTPVNLSVL</sequence>
<name>HYD17_PLEO1</name>
<accession>A0A067NHE1</accession>
<gene>
    <name evidence="5" type="primary">Hydph17</name>
    <name type="ORF">PLEOSDRAFT_171316</name>
</gene>